<gene>
    <name type="primary">yhdW</name>
    <name type="ordered locus">BSU09620</name>
</gene>
<proteinExistence type="inferred from homology"/>
<feature type="chain" id="PRO_0000387993" description="Putative glycerophosphodiester phosphodiesterase YhdW">
    <location>
        <begin position="1"/>
        <end position="243"/>
    </location>
</feature>
<feature type="domain" description="GP-PDE">
    <location>
        <begin position="1"/>
        <end position="238"/>
    </location>
</feature>
<feature type="active site" description="Proton acceptor" evidence="1">
    <location>
        <position position="6"/>
    </location>
</feature>
<feature type="active site" description="Proton donor" evidence="1">
    <location>
        <position position="48"/>
    </location>
</feature>
<feature type="binding site" evidence="1">
    <location>
        <position position="33"/>
    </location>
    <ligand>
        <name>Ca(2+)</name>
        <dbReference type="ChEBI" id="CHEBI:29108"/>
    </ligand>
</feature>
<feature type="binding site" evidence="1">
    <location>
        <position position="35"/>
    </location>
    <ligand>
        <name>Ca(2+)</name>
        <dbReference type="ChEBI" id="CHEBI:29108"/>
    </ligand>
</feature>
<feature type="binding site" evidence="1">
    <location>
        <position position="107"/>
    </location>
    <ligand>
        <name>Ca(2+)</name>
        <dbReference type="ChEBI" id="CHEBI:29108"/>
    </ligand>
</feature>
<organism>
    <name type="scientific">Bacillus subtilis (strain 168)</name>
    <dbReference type="NCBI Taxonomy" id="224308"/>
    <lineage>
        <taxon>Bacteria</taxon>
        <taxon>Bacillati</taxon>
        <taxon>Bacillota</taxon>
        <taxon>Bacilli</taxon>
        <taxon>Bacillales</taxon>
        <taxon>Bacillaceae</taxon>
        <taxon>Bacillus</taxon>
    </lineage>
</organism>
<keyword id="KW-0106">Calcium</keyword>
<keyword id="KW-0319">Glycerol metabolism</keyword>
<keyword id="KW-0378">Hydrolase</keyword>
<keyword id="KW-0479">Metal-binding</keyword>
<keyword id="KW-1185">Reference proteome</keyword>
<accession>O07592</accession>
<accession>Q796W8</accession>
<evidence type="ECO:0000250" key="1">
    <source>
        <dbReference type="UniProtKB" id="P37965"/>
    </source>
</evidence>
<evidence type="ECO:0000305" key="2"/>
<sequence length="243" mass="27477">MYIIAHRGASGYAPENTIAAFDLAVKMNADMIELDVQLTKDRQIVVIHDDRVDRTTNGSGFVKDFTLEELQKLDAGSWYGPAFQGERIPTLEAVLKRYHKKIGLLIELKGHPSQVGIEEEVGQLLGQFSFSINNIVQSFQFRSVQRFRELYPSIPTAVITRPNFGMLSRNQMKAFRSFANYVNIKHTRLNRLMIGSINKNGLNIFAWTVNNQKTAAKLQAMGVDGIVTDYPDFIIKDGKHENI</sequence>
<name>YHDW_BACSU</name>
<dbReference type="EC" id="3.1.4.46" evidence="1"/>
<dbReference type="EMBL" id="Y14082">
    <property type="protein sequence ID" value="CAA74507.1"/>
    <property type="molecule type" value="Genomic_DNA"/>
</dbReference>
<dbReference type="EMBL" id="AL009126">
    <property type="protein sequence ID" value="CAB12801.1"/>
    <property type="molecule type" value="Genomic_DNA"/>
</dbReference>
<dbReference type="PIR" id="E69827">
    <property type="entry name" value="E69827"/>
</dbReference>
<dbReference type="RefSeq" id="NP_388843.1">
    <property type="nucleotide sequence ID" value="NC_000964.3"/>
</dbReference>
<dbReference type="RefSeq" id="WP_003244958.1">
    <property type="nucleotide sequence ID" value="NZ_OZ025638.1"/>
</dbReference>
<dbReference type="SMR" id="O07592"/>
<dbReference type="FunCoup" id="O07592">
    <property type="interactions" value="274"/>
</dbReference>
<dbReference type="STRING" id="224308.BSU09620"/>
<dbReference type="PaxDb" id="224308-BSU09620"/>
<dbReference type="DNASU" id="939751"/>
<dbReference type="EnsemblBacteria" id="CAB12801">
    <property type="protein sequence ID" value="CAB12801"/>
    <property type="gene ID" value="BSU_09620"/>
</dbReference>
<dbReference type="GeneID" id="939751"/>
<dbReference type="KEGG" id="bsu:BSU09620"/>
<dbReference type="PATRIC" id="fig|224308.179.peg.1035"/>
<dbReference type="eggNOG" id="COG0584">
    <property type="taxonomic scope" value="Bacteria"/>
</dbReference>
<dbReference type="InParanoid" id="O07592"/>
<dbReference type="OrthoDB" id="384721at2"/>
<dbReference type="PhylomeDB" id="O07592"/>
<dbReference type="BioCyc" id="BSUB:BSU09620-MONOMER"/>
<dbReference type="Proteomes" id="UP000001570">
    <property type="component" value="Chromosome"/>
</dbReference>
<dbReference type="GO" id="GO:0008889">
    <property type="term" value="F:glycerophosphodiester phosphodiesterase activity"/>
    <property type="evidence" value="ECO:0007669"/>
    <property type="project" value="UniProtKB-EC"/>
</dbReference>
<dbReference type="GO" id="GO:0046872">
    <property type="term" value="F:metal ion binding"/>
    <property type="evidence" value="ECO:0007669"/>
    <property type="project" value="UniProtKB-KW"/>
</dbReference>
<dbReference type="GO" id="GO:0006071">
    <property type="term" value="P:glycerol metabolic process"/>
    <property type="evidence" value="ECO:0007669"/>
    <property type="project" value="UniProtKB-KW"/>
</dbReference>
<dbReference type="GO" id="GO:0006629">
    <property type="term" value="P:lipid metabolic process"/>
    <property type="evidence" value="ECO:0007669"/>
    <property type="project" value="InterPro"/>
</dbReference>
<dbReference type="Gene3D" id="3.20.20.190">
    <property type="entry name" value="Phosphatidylinositol (PI) phosphodiesterase"/>
    <property type="match status" value="1"/>
</dbReference>
<dbReference type="InterPro" id="IPR030395">
    <property type="entry name" value="GP_PDE_dom"/>
</dbReference>
<dbReference type="InterPro" id="IPR017946">
    <property type="entry name" value="PLC-like_Pdiesterase_TIM-brl"/>
</dbReference>
<dbReference type="PANTHER" id="PTHR46211:SF1">
    <property type="entry name" value="GLYCEROPHOSPHODIESTER PHOSPHODIESTERASE, CYTOPLASMIC"/>
    <property type="match status" value="1"/>
</dbReference>
<dbReference type="PANTHER" id="PTHR46211">
    <property type="entry name" value="GLYCEROPHOSPHORYL DIESTER PHOSPHODIESTERASE"/>
    <property type="match status" value="1"/>
</dbReference>
<dbReference type="Pfam" id="PF03009">
    <property type="entry name" value="GDPD"/>
    <property type="match status" value="1"/>
</dbReference>
<dbReference type="SUPFAM" id="SSF51695">
    <property type="entry name" value="PLC-like phosphodiesterases"/>
    <property type="match status" value="1"/>
</dbReference>
<dbReference type="PROSITE" id="PS51704">
    <property type="entry name" value="GP_PDE"/>
    <property type="match status" value="1"/>
</dbReference>
<reference key="1">
    <citation type="journal article" date="1998" name="Microbiology">
        <title>The 172 kb prkA-addAB region from 83 degrees to 97 degrees of the Bacillus subtilis chromosome contains several dysfunctional genes, the glyB marker, many genes encoding transporter proteins, and the ubiquitous hit gene.</title>
        <authorList>
            <person name="Noback M.A."/>
            <person name="Holsappel S."/>
            <person name="Kiewiet R."/>
            <person name="Terpstra P."/>
            <person name="Wambutt R."/>
            <person name="Wedler H."/>
            <person name="Venema G."/>
            <person name="Bron S."/>
        </authorList>
    </citation>
    <scope>NUCLEOTIDE SEQUENCE [GENOMIC DNA]</scope>
    <source>
        <strain>168</strain>
    </source>
</reference>
<reference key="2">
    <citation type="journal article" date="1997" name="Nature">
        <title>The complete genome sequence of the Gram-positive bacterium Bacillus subtilis.</title>
        <authorList>
            <person name="Kunst F."/>
            <person name="Ogasawara N."/>
            <person name="Moszer I."/>
            <person name="Albertini A.M."/>
            <person name="Alloni G."/>
            <person name="Azevedo V."/>
            <person name="Bertero M.G."/>
            <person name="Bessieres P."/>
            <person name="Bolotin A."/>
            <person name="Borchert S."/>
            <person name="Borriss R."/>
            <person name="Boursier L."/>
            <person name="Brans A."/>
            <person name="Braun M."/>
            <person name="Brignell S.C."/>
            <person name="Bron S."/>
            <person name="Brouillet S."/>
            <person name="Bruschi C.V."/>
            <person name="Caldwell B."/>
            <person name="Capuano V."/>
            <person name="Carter N.M."/>
            <person name="Choi S.-K."/>
            <person name="Codani J.-J."/>
            <person name="Connerton I.F."/>
            <person name="Cummings N.J."/>
            <person name="Daniel R.A."/>
            <person name="Denizot F."/>
            <person name="Devine K.M."/>
            <person name="Duesterhoeft A."/>
            <person name="Ehrlich S.D."/>
            <person name="Emmerson P.T."/>
            <person name="Entian K.-D."/>
            <person name="Errington J."/>
            <person name="Fabret C."/>
            <person name="Ferrari E."/>
            <person name="Foulger D."/>
            <person name="Fritz C."/>
            <person name="Fujita M."/>
            <person name="Fujita Y."/>
            <person name="Fuma S."/>
            <person name="Galizzi A."/>
            <person name="Galleron N."/>
            <person name="Ghim S.-Y."/>
            <person name="Glaser P."/>
            <person name="Goffeau A."/>
            <person name="Golightly E.J."/>
            <person name="Grandi G."/>
            <person name="Guiseppi G."/>
            <person name="Guy B.J."/>
            <person name="Haga K."/>
            <person name="Haiech J."/>
            <person name="Harwood C.R."/>
            <person name="Henaut A."/>
            <person name="Hilbert H."/>
            <person name="Holsappel S."/>
            <person name="Hosono S."/>
            <person name="Hullo M.-F."/>
            <person name="Itaya M."/>
            <person name="Jones L.-M."/>
            <person name="Joris B."/>
            <person name="Karamata D."/>
            <person name="Kasahara Y."/>
            <person name="Klaerr-Blanchard M."/>
            <person name="Klein C."/>
            <person name="Kobayashi Y."/>
            <person name="Koetter P."/>
            <person name="Koningstein G."/>
            <person name="Krogh S."/>
            <person name="Kumano M."/>
            <person name="Kurita K."/>
            <person name="Lapidus A."/>
            <person name="Lardinois S."/>
            <person name="Lauber J."/>
            <person name="Lazarevic V."/>
            <person name="Lee S.-M."/>
            <person name="Levine A."/>
            <person name="Liu H."/>
            <person name="Masuda S."/>
            <person name="Mauel C."/>
            <person name="Medigue C."/>
            <person name="Medina N."/>
            <person name="Mellado R.P."/>
            <person name="Mizuno M."/>
            <person name="Moestl D."/>
            <person name="Nakai S."/>
            <person name="Noback M."/>
            <person name="Noone D."/>
            <person name="O'Reilly M."/>
            <person name="Ogawa K."/>
            <person name="Ogiwara A."/>
            <person name="Oudega B."/>
            <person name="Park S.-H."/>
            <person name="Parro V."/>
            <person name="Pohl T.M."/>
            <person name="Portetelle D."/>
            <person name="Porwollik S."/>
            <person name="Prescott A.M."/>
            <person name="Presecan E."/>
            <person name="Pujic P."/>
            <person name="Purnelle B."/>
            <person name="Rapoport G."/>
            <person name="Rey M."/>
            <person name="Reynolds S."/>
            <person name="Rieger M."/>
            <person name="Rivolta C."/>
            <person name="Rocha E."/>
            <person name="Roche B."/>
            <person name="Rose M."/>
            <person name="Sadaie Y."/>
            <person name="Sato T."/>
            <person name="Scanlan E."/>
            <person name="Schleich S."/>
            <person name="Schroeter R."/>
            <person name="Scoffone F."/>
            <person name="Sekiguchi J."/>
            <person name="Sekowska A."/>
            <person name="Seror S.J."/>
            <person name="Serror P."/>
            <person name="Shin B.-S."/>
            <person name="Soldo B."/>
            <person name="Sorokin A."/>
            <person name="Tacconi E."/>
            <person name="Takagi T."/>
            <person name="Takahashi H."/>
            <person name="Takemaru K."/>
            <person name="Takeuchi M."/>
            <person name="Tamakoshi A."/>
            <person name="Tanaka T."/>
            <person name="Terpstra P."/>
            <person name="Tognoni A."/>
            <person name="Tosato V."/>
            <person name="Uchiyama S."/>
            <person name="Vandenbol M."/>
            <person name="Vannier F."/>
            <person name="Vassarotti A."/>
            <person name="Viari A."/>
            <person name="Wambutt R."/>
            <person name="Wedler E."/>
            <person name="Wedler H."/>
            <person name="Weitzenegger T."/>
            <person name="Winters P."/>
            <person name="Wipat A."/>
            <person name="Yamamoto H."/>
            <person name="Yamane K."/>
            <person name="Yasumoto K."/>
            <person name="Yata K."/>
            <person name="Yoshida K."/>
            <person name="Yoshikawa H.-F."/>
            <person name="Zumstein E."/>
            <person name="Yoshikawa H."/>
            <person name="Danchin A."/>
        </authorList>
    </citation>
    <scope>NUCLEOTIDE SEQUENCE [LARGE SCALE GENOMIC DNA]</scope>
    <source>
        <strain>168</strain>
    </source>
</reference>
<comment type="function">
    <text evidence="1">Glycerophosphodiester phosphodiesterase hydrolyzes glycerophosphodiesters into glycerol-3-phosphate (G3P) and the corresponding alcohol.</text>
</comment>
<comment type="catalytic activity">
    <reaction evidence="1">
        <text>a sn-glycero-3-phosphodiester + H2O = an alcohol + sn-glycerol 3-phosphate + H(+)</text>
        <dbReference type="Rhea" id="RHEA:12969"/>
        <dbReference type="ChEBI" id="CHEBI:15377"/>
        <dbReference type="ChEBI" id="CHEBI:15378"/>
        <dbReference type="ChEBI" id="CHEBI:30879"/>
        <dbReference type="ChEBI" id="CHEBI:57597"/>
        <dbReference type="ChEBI" id="CHEBI:83408"/>
        <dbReference type="EC" id="3.1.4.46"/>
    </reaction>
</comment>
<comment type="cofactor">
    <cofactor evidence="1">
        <name>Ca(2+)</name>
        <dbReference type="ChEBI" id="CHEBI:29108"/>
    </cofactor>
    <text evidence="1">Binds 1 Ca(2+) ion per subunit.</text>
</comment>
<comment type="similarity">
    <text evidence="2">Belongs to the glycerophosphoryl diester phosphodiesterase family.</text>
</comment>
<protein>
    <recommendedName>
        <fullName>Putative glycerophosphodiester phosphodiesterase YhdW</fullName>
        <shortName>Glycerophosphoryl diester phosphodiesterase</shortName>
        <ecNumber evidence="1">3.1.4.46</ecNumber>
    </recommendedName>
</protein>